<feature type="signal peptide" evidence="2">
    <location>
        <begin position="1"/>
        <end position="19"/>
    </location>
</feature>
<feature type="chain" id="PRO_0000014386" description="Insulin-like growth factor-binding protein 5">
    <location>
        <begin position="20"/>
        <end position="271"/>
    </location>
</feature>
<feature type="domain" description="IGFBP N-terminal" evidence="4">
    <location>
        <begin position="22"/>
        <end position="102"/>
    </location>
</feature>
<feature type="domain" description="Thyroglobulin type-1" evidence="3">
    <location>
        <begin position="188"/>
        <end position="262"/>
    </location>
</feature>
<feature type="region of interest" description="Disordered" evidence="5">
    <location>
        <begin position="109"/>
        <end position="129"/>
    </location>
</feature>
<feature type="compositionally biased region" description="Basic and acidic residues" evidence="5">
    <location>
        <begin position="109"/>
        <end position="121"/>
    </location>
</feature>
<feature type="modified residue" description="Phosphoserine" evidence="1">
    <location>
        <position position="115"/>
    </location>
</feature>
<feature type="disulfide bond" evidence="4">
    <location>
        <begin position="26"/>
        <end position="52"/>
    </location>
</feature>
<feature type="disulfide bond" evidence="4">
    <location>
        <begin position="29"/>
        <end position="54"/>
    </location>
</feature>
<feature type="disulfide bond" evidence="4">
    <location>
        <begin position="37"/>
        <end position="55"/>
    </location>
</feature>
<feature type="disulfide bond" evidence="4">
    <location>
        <begin position="44"/>
        <end position="58"/>
    </location>
</feature>
<feature type="disulfide bond" evidence="4">
    <location>
        <begin position="66"/>
        <end position="79"/>
    </location>
</feature>
<feature type="disulfide bond" evidence="4">
    <location>
        <begin position="73"/>
        <end position="99"/>
    </location>
</feature>
<feature type="disulfide bond" evidence="3">
    <location>
        <begin position="191"/>
        <end position="218"/>
    </location>
</feature>
<feature type="disulfide bond" evidence="3">
    <location>
        <begin position="229"/>
        <end position="240"/>
    </location>
</feature>
<feature type="disulfide bond" evidence="3">
    <location>
        <begin position="242"/>
        <end position="262"/>
    </location>
</feature>
<feature type="sequence conflict" description="In Ref. 2; AAC01750." evidence="9" ref="2">
    <location>
        <position position="112"/>
    </location>
</feature>
<reference key="1">
    <citation type="journal article" date="1993" name="J. Biol. Chem.">
        <title>A highly conserved insulin-like growth factor-binding protein (IGFBP-5) is expressed during myoblast differentiation.</title>
        <authorList>
            <person name="James P.L."/>
            <person name="Jones S.B."/>
            <person name="Busby W.H. Jr."/>
            <person name="Clemmons D.R."/>
            <person name="Rotwein P."/>
        </authorList>
    </citation>
    <scope>NUCLEOTIDE SEQUENCE [MRNA]</scope>
    <scope>PARTIAL PROTEIN SEQUENCE</scope>
    <source>
        <tissue>Myoblast</tissue>
    </source>
</reference>
<reference key="2">
    <citation type="journal article" date="1994" name="Genomics">
        <title>Organization, expression, and chromosomal location of the mouse insulin-like growth factor binding protein 5 gene.</title>
        <authorList>
            <person name="Kou K."/>
            <person name="Jenkins N.A."/>
            <person name="Gilbert D.J."/>
            <person name="Copeland N.G."/>
            <person name="Rotwein P."/>
        </authorList>
    </citation>
    <scope>NUCLEOTIDE SEQUENCE [GENOMIC DNA]</scope>
    <source>
        <tissue>Spleen</tissue>
    </source>
</reference>
<reference key="3">
    <citation type="journal article" date="1994" name="Mol. Cell. Endocrinol.">
        <title>cDNA cloning and mRNA expression of the six mouse insulin-like growth factor binding proteins.</title>
        <authorList>
            <person name="Schuller A.G.P."/>
            <person name="Groffen C."/>
            <person name="van Neck J.W."/>
            <person name="Zwarthoff E.C."/>
            <person name="Drop S.L.S."/>
        </authorList>
    </citation>
    <scope>NUCLEOTIDE SEQUENCE [MRNA]</scope>
    <source>
        <tissue>Kidney</tissue>
    </source>
</reference>
<reference key="4">
    <citation type="journal article" date="2004" name="Genome Res.">
        <title>The status, quality, and expansion of the NIH full-length cDNA project: the Mammalian Gene Collection (MGC).</title>
        <authorList>
            <consortium name="The MGC Project Team"/>
        </authorList>
    </citation>
    <scope>NUCLEOTIDE SEQUENCE [LARGE SCALE MRNA]</scope>
    <source>
        <strain>C57BL/6J</strain>
        <strain>FVB/N</strain>
        <tissue>Brain</tissue>
        <tissue>Mammary gland</tissue>
    </source>
</reference>
<reference key="5">
    <citation type="journal article" date="2004" name="Proc. Natl. Acad. Sci. U.S.A.">
        <title>Insulin-like growth factor-binding protein 5 (Igfbp5) compromises survival, growth, muscle development, and fertility in mice.</title>
        <authorList>
            <person name="Salih D.A."/>
            <person name="Tripathi G."/>
            <person name="Holding C."/>
            <person name="Szestak T.A."/>
            <person name="Gonzalez M.I."/>
            <person name="Carter E.J."/>
            <person name="Cobb L.J."/>
            <person name="Eisemann J.E."/>
            <person name="Pell J.M."/>
        </authorList>
    </citation>
    <scope>FUNCTION</scope>
    <scope>DISRUPTION PHENOTYPE</scope>
</reference>
<reference key="6">
    <citation type="journal article" date="2010" name="Cell">
        <title>A tissue-specific atlas of mouse protein phosphorylation and expression.</title>
        <authorList>
            <person name="Huttlin E.L."/>
            <person name="Jedrychowski M.P."/>
            <person name="Elias J.E."/>
            <person name="Goswami T."/>
            <person name="Rad R."/>
            <person name="Beausoleil S.A."/>
            <person name="Villen J."/>
            <person name="Haas W."/>
            <person name="Sowa M.E."/>
            <person name="Gygi S.P."/>
        </authorList>
    </citation>
    <scope>IDENTIFICATION BY MASS SPECTROMETRY [LARGE SCALE ANALYSIS]</scope>
    <source>
        <tissue>Kidney</tissue>
    </source>
</reference>
<reference key="7">
    <citation type="journal article" date="2013" name="Int. J. Biochem. Cell Biol.">
        <title>IGFBP-5 enhances epithelial cell adhesion and protects epithelial cells from TGFbeta1-induced mesenchymal invasion.</title>
        <authorList>
            <person name="Vijayan A."/>
            <person name="Guha D."/>
            <person name="Ameer F."/>
            <person name="Kaziri I."/>
            <person name="Mooney C.C."/>
            <person name="Bennett L."/>
            <person name="Sureshbabu A."/>
            <person name="Tonner E."/>
            <person name="Beattie J."/>
            <person name="Allan G.J."/>
            <person name="Edwards J."/>
            <person name="Flint D.J."/>
        </authorList>
    </citation>
    <scope>FUNCTION</scope>
</reference>
<reference key="8">
    <citation type="journal article" date="2016" name="Nat. Cell Biol.">
        <title>Secreted IGFBP5 mediates mTORC1-dependent feedback inhibition of IGF-1 signalling.</title>
        <authorList>
            <person name="Ding M."/>
            <person name="Bruick R.K."/>
            <person name="Yu Y."/>
        </authorList>
    </citation>
    <scope>FUNCTION</scope>
    <scope>SUBCELLULAR LOCATION</scope>
    <scope>INDUCTION BY HIF1A</scope>
</reference>
<protein>
    <recommendedName>
        <fullName>Insulin-like growth factor-binding protein 5</fullName>
        <shortName>IBP-5</shortName>
        <shortName>IGF-binding protein 5</shortName>
        <shortName>IGFBP-5</shortName>
    </recommendedName>
</protein>
<accession>Q07079</accession>
<name>IBP5_MOUSE</name>
<keyword id="KW-0963">Cytoplasm</keyword>
<keyword id="KW-0903">Direct protein sequencing</keyword>
<keyword id="KW-1015">Disulfide bond</keyword>
<keyword id="KW-0340">Growth factor binding</keyword>
<keyword id="KW-0539">Nucleus</keyword>
<keyword id="KW-0597">Phosphoprotein</keyword>
<keyword id="KW-1185">Reference proteome</keyword>
<keyword id="KW-0964">Secreted</keyword>
<keyword id="KW-0732">Signal</keyword>
<sequence>MVISVVLLLLAAYAVPAQGLGSFVHCEPCDEKALSMCPPSPLGCELVKEPGCGCCMTCALAEGQSCGVYTERCAQGLRCLPRQDEEKPLHALLHGRGVCLNEKSYGEQTKIERDSREHEEPTTSEMAEETYSPKVFRPKHTRISELKAEAVKKDRRKKLTQSKFVGGAENTAHPRVIPAPEMRQESEQGPCRRHMEASLQEFKASPRMVPRAVYLPNCDRKGFYKRKQCKPSRGRKRGICWCVDKYGMKLPGMEYVDGDFQCHAFDSSNVE</sequence>
<evidence type="ECO:0000250" key="1">
    <source>
        <dbReference type="UniProtKB" id="P24593"/>
    </source>
</evidence>
<evidence type="ECO:0000255" key="2"/>
<evidence type="ECO:0000255" key="3">
    <source>
        <dbReference type="PROSITE-ProRule" id="PRU00500"/>
    </source>
</evidence>
<evidence type="ECO:0000255" key="4">
    <source>
        <dbReference type="PROSITE-ProRule" id="PRU00653"/>
    </source>
</evidence>
<evidence type="ECO:0000256" key="5">
    <source>
        <dbReference type="SAM" id="MobiDB-lite"/>
    </source>
</evidence>
<evidence type="ECO:0000269" key="6">
    <source>
    </source>
</evidence>
<evidence type="ECO:0000269" key="7">
    <source>
    </source>
</evidence>
<evidence type="ECO:0000269" key="8">
    <source>
    </source>
</evidence>
<evidence type="ECO:0000305" key="9"/>
<comment type="function">
    <text evidence="1 7">Multifunctional protein that plays a critical role in regulating the availability of IGFs to their receptors and thereby regulates IGF-mediated cellular processes including proliferation, differentiation, and apoptosis in a cell-type specific manner. Increases the cell proliferation of osteoblasts, intestinal smooth muscle cells and neuroblastoma cells (By similarity). Enhances adhesion and survival of epithelial cells but decreases adhesion of mesenchymal cells (PubMed:24120850). Once secreted, acts as a major mediator of mTORC1-dependent feedback inhibition of IGF1 signaling (By similarity). Also plays a role in the induction of extracellular matrix (ECM) production and deposition independently of its nuclear translocation and binding to IGFs. Acts itself as a growth factor that can act independently of IGFs to regulate bone formation. Acts as a ligand for the ROR1 receptor which triggers formation of ROR1/HER2 heterodimer to enhance CREB oncogenic signaling (By similarity).</text>
</comment>
<comment type="subunit">
    <text evidence="1">Interacts with IGF1; this interaction enhances the growth stimulatory effects of IGF1 on fibroblasts. Interacts with CAV1; this interaction allows trafficking of IGFBP5 from the plasma membrane to the nucleus. Interacts with NCL; this interaction is necessary for IGFBP5 localization to the nucleus.</text>
</comment>
<comment type="subcellular location">
    <subcellularLocation>
        <location evidence="8">Secreted</location>
    </subcellularLocation>
    <subcellularLocation>
        <location evidence="1">Cytoplasm</location>
    </subcellularLocation>
    <subcellularLocation>
        <location evidence="1">Nucleus</location>
    </subcellularLocation>
</comment>
<comment type="tissue specificity">
    <text>Most abundant in kidney, uterus and gastrocnemius muscle.</text>
</comment>
<comment type="induction">
    <text evidence="8">Transcriptionally by HIF1A, which itself is a mTORC1 target.</text>
</comment>
<comment type="disruption phenotype">
    <text evidence="6">Transgenic mice show increased neonatal mortality and decreased whole body growth as well as decreased muscle development, indicating that excess IGFBP-5 compromises survival, growth, muscle development, and fertility in mice.</text>
</comment>
<organism>
    <name type="scientific">Mus musculus</name>
    <name type="common">Mouse</name>
    <dbReference type="NCBI Taxonomy" id="10090"/>
    <lineage>
        <taxon>Eukaryota</taxon>
        <taxon>Metazoa</taxon>
        <taxon>Chordata</taxon>
        <taxon>Craniata</taxon>
        <taxon>Vertebrata</taxon>
        <taxon>Euteleostomi</taxon>
        <taxon>Mammalia</taxon>
        <taxon>Eutheria</taxon>
        <taxon>Euarchontoglires</taxon>
        <taxon>Glires</taxon>
        <taxon>Rodentia</taxon>
        <taxon>Myomorpha</taxon>
        <taxon>Muroidea</taxon>
        <taxon>Muridae</taxon>
        <taxon>Murinae</taxon>
        <taxon>Mus</taxon>
        <taxon>Mus</taxon>
    </lineage>
</organism>
<gene>
    <name type="primary">Igfbp5</name>
    <name type="synonym">Igfbp-5</name>
</gene>
<proteinExistence type="evidence at protein level"/>
<dbReference type="EMBL" id="L12447">
    <property type="protein sequence ID" value="AAC37636.1"/>
    <property type="molecule type" value="mRNA"/>
</dbReference>
<dbReference type="EMBL" id="U02025">
    <property type="protein sequence ID" value="AAC01750.1"/>
    <property type="molecule type" value="Genomic_DNA"/>
</dbReference>
<dbReference type="EMBL" id="U02023">
    <property type="protein sequence ID" value="AAC01750.1"/>
    <property type="status" value="JOINED"/>
    <property type="molecule type" value="Genomic_DNA"/>
</dbReference>
<dbReference type="EMBL" id="U02027">
    <property type="protein sequence ID" value="AAC01750.1"/>
    <property type="status" value="JOINED"/>
    <property type="molecule type" value="Genomic_DNA"/>
</dbReference>
<dbReference type="EMBL" id="U02024">
    <property type="protein sequence ID" value="AAC01750.1"/>
    <property type="status" value="JOINED"/>
    <property type="molecule type" value="Genomic_DNA"/>
</dbReference>
<dbReference type="EMBL" id="X81583">
    <property type="protein sequence ID" value="CAA57273.1"/>
    <property type="molecule type" value="mRNA"/>
</dbReference>
<dbReference type="EMBL" id="BC054812">
    <property type="protein sequence ID" value="AAH54812.1"/>
    <property type="molecule type" value="mRNA"/>
</dbReference>
<dbReference type="EMBL" id="BC057447">
    <property type="protein sequence ID" value="AAH57447.1"/>
    <property type="molecule type" value="mRNA"/>
</dbReference>
<dbReference type="CCDS" id="CCDS15037.1"/>
<dbReference type="PIR" id="I48604">
    <property type="entry name" value="I48604"/>
</dbReference>
<dbReference type="RefSeq" id="NP_034648.2">
    <property type="nucleotide sequence ID" value="NM_010518.2"/>
</dbReference>
<dbReference type="SMR" id="Q07079"/>
<dbReference type="BioGRID" id="200557">
    <property type="interactions" value="5"/>
</dbReference>
<dbReference type="FunCoup" id="Q07079">
    <property type="interactions" value="240"/>
</dbReference>
<dbReference type="IntAct" id="Q07079">
    <property type="interactions" value="1"/>
</dbReference>
<dbReference type="STRING" id="10090.ENSMUSP00000027377"/>
<dbReference type="MEROPS" id="I31.952"/>
<dbReference type="iPTMnet" id="Q07079"/>
<dbReference type="PhosphoSitePlus" id="Q07079"/>
<dbReference type="jPOST" id="Q07079"/>
<dbReference type="PaxDb" id="10090-ENSMUSP00000027377"/>
<dbReference type="PeptideAtlas" id="Q07079"/>
<dbReference type="ProteomicsDB" id="267082"/>
<dbReference type="Pumba" id="Q07079"/>
<dbReference type="Antibodypedia" id="3978">
    <property type="antibodies" value="450 antibodies from 39 providers"/>
</dbReference>
<dbReference type="DNASU" id="16011"/>
<dbReference type="Ensembl" id="ENSMUST00000027377.9">
    <property type="protein sequence ID" value="ENSMUSP00000027377.9"/>
    <property type="gene ID" value="ENSMUSG00000026185.9"/>
</dbReference>
<dbReference type="GeneID" id="16011"/>
<dbReference type="KEGG" id="mmu:16011"/>
<dbReference type="UCSC" id="uc007bkx.1">
    <property type="organism name" value="mouse"/>
</dbReference>
<dbReference type="AGR" id="MGI:96440"/>
<dbReference type="CTD" id="3488"/>
<dbReference type="MGI" id="MGI:96440">
    <property type="gene designation" value="Igfbp5"/>
</dbReference>
<dbReference type="VEuPathDB" id="HostDB:ENSMUSG00000026185"/>
<dbReference type="eggNOG" id="ENOG502QUPK">
    <property type="taxonomic scope" value="Eukaryota"/>
</dbReference>
<dbReference type="GeneTree" id="ENSGT00940000155890"/>
<dbReference type="HOGENOM" id="CLU_070833_1_1_1"/>
<dbReference type="InParanoid" id="Q07079"/>
<dbReference type="OMA" id="YTERCAL"/>
<dbReference type="OrthoDB" id="6068400at2759"/>
<dbReference type="PhylomeDB" id="Q07079"/>
<dbReference type="TreeFam" id="TF331211"/>
<dbReference type="Reactome" id="R-MMU-381426">
    <property type="pathway name" value="Regulation of Insulin-like Growth Factor (IGF) transport and uptake by Insulin-like Growth Factor Binding Proteins (IGFBPs)"/>
</dbReference>
<dbReference type="Reactome" id="R-MMU-8957275">
    <property type="pathway name" value="Post-translational protein phosphorylation"/>
</dbReference>
<dbReference type="BioGRID-ORCS" id="16011">
    <property type="hits" value="2 hits in 77 CRISPR screens"/>
</dbReference>
<dbReference type="ChiTaRS" id="Igfbp5">
    <property type="organism name" value="mouse"/>
</dbReference>
<dbReference type="PRO" id="PR:Q07079"/>
<dbReference type="Proteomes" id="UP000000589">
    <property type="component" value="Chromosome 1"/>
</dbReference>
<dbReference type="RNAct" id="Q07079">
    <property type="molecule type" value="protein"/>
</dbReference>
<dbReference type="Bgee" id="ENSMUSG00000026185">
    <property type="expression patterns" value="Expressed in ciliary body and 299 other cell types or tissues"/>
</dbReference>
<dbReference type="ExpressionAtlas" id="Q07079">
    <property type="expression patterns" value="baseline and differential"/>
</dbReference>
<dbReference type="GO" id="GO:0005737">
    <property type="term" value="C:cytoplasm"/>
    <property type="evidence" value="ECO:0007669"/>
    <property type="project" value="UniProtKB-SubCell"/>
</dbReference>
<dbReference type="GO" id="GO:0016942">
    <property type="term" value="C:insulin-like growth factor binding protein complex"/>
    <property type="evidence" value="ECO:0000305"/>
    <property type="project" value="MGI"/>
</dbReference>
<dbReference type="GO" id="GO:0042567">
    <property type="term" value="C:insulin-like growth factor ternary complex"/>
    <property type="evidence" value="ECO:0000250"/>
    <property type="project" value="BHF-UCL"/>
</dbReference>
<dbReference type="GO" id="GO:0005634">
    <property type="term" value="C:nucleus"/>
    <property type="evidence" value="ECO:0007669"/>
    <property type="project" value="UniProtKB-SubCell"/>
</dbReference>
<dbReference type="GO" id="GO:0001968">
    <property type="term" value="F:fibronectin binding"/>
    <property type="evidence" value="ECO:0000314"/>
    <property type="project" value="MGI"/>
</dbReference>
<dbReference type="GO" id="GO:0005520">
    <property type="term" value="F:insulin-like growth factor binding"/>
    <property type="evidence" value="ECO:0000353"/>
    <property type="project" value="MGI"/>
</dbReference>
<dbReference type="GO" id="GO:0031994">
    <property type="term" value="F:insulin-like growth factor I binding"/>
    <property type="evidence" value="ECO:0000304"/>
    <property type="project" value="BHF-UCL"/>
</dbReference>
<dbReference type="GO" id="GO:0048018">
    <property type="term" value="F:receptor ligand activity"/>
    <property type="evidence" value="ECO:0007669"/>
    <property type="project" value="Ensembl"/>
</dbReference>
<dbReference type="GO" id="GO:0071320">
    <property type="term" value="P:cellular response to cAMP"/>
    <property type="evidence" value="ECO:0007669"/>
    <property type="project" value="Ensembl"/>
</dbReference>
<dbReference type="GO" id="GO:0007565">
    <property type="term" value="P:female pregnancy"/>
    <property type="evidence" value="ECO:0000315"/>
    <property type="project" value="BHF-UCL"/>
</dbReference>
<dbReference type="GO" id="GO:0042593">
    <property type="term" value="P:glucose homeostasis"/>
    <property type="evidence" value="ECO:0000315"/>
    <property type="project" value="MGI"/>
</dbReference>
<dbReference type="GO" id="GO:0031069">
    <property type="term" value="P:hair follicle morphogenesis"/>
    <property type="evidence" value="ECO:0000315"/>
    <property type="project" value="MGI"/>
</dbReference>
<dbReference type="GO" id="GO:0048009">
    <property type="term" value="P:insulin-like growth factor receptor signaling pathway"/>
    <property type="evidence" value="ECO:0000315"/>
    <property type="project" value="MGI"/>
</dbReference>
<dbReference type="GO" id="GO:0035556">
    <property type="term" value="P:intracellular signal transduction"/>
    <property type="evidence" value="ECO:0007669"/>
    <property type="project" value="Ensembl"/>
</dbReference>
<dbReference type="GO" id="GO:0048286">
    <property type="term" value="P:lung alveolus development"/>
    <property type="evidence" value="ECO:0000315"/>
    <property type="project" value="BHF-UCL"/>
</dbReference>
<dbReference type="GO" id="GO:0060056">
    <property type="term" value="P:mammary gland involution"/>
    <property type="evidence" value="ECO:0000315"/>
    <property type="project" value="MGI"/>
</dbReference>
<dbReference type="GO" id="GO:0045926">
    <property type="term" value="P:negative regulation of growth"/>
    <property type="evidence" value="ECO:0000315"/>
    <property type="project" value="BHF-UCL"/>
</dbReference>
<dbReference type="GO" id="GO:0043569">
    <property type="term" value="P:negative regulation of insulin-like growth factor receptor signaling pathway"/>
    <property type="evidence" value="ECO:0000315"/>
    <property type="project" value="MGI"/>
</dbReference>
<dbReference type="GO" id="GO:1901862">
    <property type="term" value="P:negative regulation of muscle tissue development"/>
    <property type="evidence" value="ECO:0000315"/>
    <property type="project" value="BHF-UCL"/>
</dbReference>
<dbReference type="GO" id="GO:0045668">
    <property type="term" value="P:negative regulation of osteoblast differentiation"/>
    <property type="evidence" value="ECO:0000316"/>
    <property type="project" value="MGI"/>
</dbReference>
<dbReference type="GO" id="GO:1904205">
    <property type="term" value="P:negative regulation of skeletal muscle hypertrophy"/>
    <property type="evidence" value="ECO:0000315"/>
    <property type="project" value="BHF-UCL"/>
</dbReference>
<dbReference type="GO" id="GO:0014912">
    <property type="term" value="P:negative regulation of smooth muscle cell migration"/>
    <property type="evidence" value="ECO:0007669"/>
    <property type="project" value="Ensembl"/>
</dbReference>
<dbReference type="GO" id="GO:0048662">
    <property type="term" value="P:negative regulation of smooth muscle cell proliferation"/>
    <property type="evidence" value="ECO:0007669"/>
    <property type="project" value="Ensembl"/>
</dbReference>
<dbReference type="GO" id="GO:0017148">
    <property type="term" value="P:negative regulation of translation"/>
    <property type="evidence" value="ECO:0007669"/>
    <property type="project" value="Ensembl"/>
</dbReference>
<dbReference type="GO" id="GO:0001649">
    <property type="term" value="P:osteoblast differentiation"/>
    <property type="evidence" value="ECO:0000270"/>
    <property type="project" value="BHF-UCL"/>
</dbReference>
<dbReference type="GO" id="GO:0043568">
    <property type="term" value="P:positive regulation of insulin-like growth factor receptor signaling pathway"/>
    <property type="evidence" value="ECO:0000316"/>
    <property type="project" value="MGI"/>
</dbReference>
<dbReference type="GO" id="GO:0051897">
    <property type="term" value="P:positive regulation of phosphatidylinositol 3-kinase/protein kinase B signal transduction"/>
    <property type="evidence" value="ECO:0000315"/>
    <property type="project" value="MGI"/>
</dbReference>
<dbReference type="GO" id="GO:1904754">
    <property type="term" value="P:positive regulation of vascular associated smooth muscle cell migration"/>
    <property type="evidence" value="ECO:0007669"/>
    <property type="project" value="Ensembl"/>
</dbReference>
<dbReference type="GO" id="GO:1904707">
    <property type="term" value="P:positive regulation of vascular associated smooth muscle cell proliferation"/>
    <property type="evidence" value="ECO:0007669"/>
    <property type="project" value="Ensembl"/>
</dbReference>
<dbReference type="GO" id="GO:0001558">
    <property type="term" value="P:regulation of cell growth"/>
    <property type="evidence" value="ECO:0000316"/>
    <property type="project" value="MGI"/>
</dbReference>
<dbReference type="GO" id="GO:0040008">
    <property type="term" value="P:regulation of growth"/>
    <property type="evidence" value="ECO:0000316"/>
    <property type="project" value="MGI"/>
</dbReference>
<dbReference type="GO" id="GO:0043567">
    <property type="term" value="P:regulation of insulin-like growth factor receptor signaling pathway"/>
    <property type="evidence" value="ECO:0000304"/>
    <property type="project" value="BHF-UCL"/>
</dbReference>
<dbReference type="GO" id="GO:0060416">
    <property type="term" value="P:response to growth hormone"/>
    <property type="evidence" value="ECO:0000250"/>
    <property type="project" value="AgBase"/>
</dbReference>
<dbReference type="GO" id="GO:0051146">
    <property type="term" value="P:striated muscle cell differentiation"/>
    <property type="evidence" value="ECO:0000315"/>
    <property type="project" value="MGI"/>
</dbReference>
<dbReference type="GO" id="GO:0044342">
    <property type="term" value="P:type B pancreatic cell proliferation"/>
    <property type="evidence" value="ECO:0000316"/>
    <property type="project" value="MGI"/>
</dbReference>
<dbReference type="CDD" id="cd00191">
    <property type="entry name" value="TY"/>
    <property type="match status" value="1"/>
</dbReference>
<dbReference type="FunFam" id="4.10.40.20:FF:000001">
    <property type="entry name" value="Insulin-like growth factor binding protein 5"/>
    <property type="match status" value="1"/>
</dbReference>
<dbReference type="FunFam" id="4.10.800.10:FF:000005">
    <property type="entry name" value="Putative insulin-like growth factor-binding protein 5"/>
    <property type="match status" value="1"/>
</dbReference>
<dbReference type="Gene3D" id="4.10.40.20">
    <property type="match status" value="1"/>
</dbReference>
<dbReference type="Gene3D" id="4.10.800.10">
    <property type="entry name" value="Thyroglobulin type-1"/>
    <property type="match status" value="1"/>
</dbReference>
<dbReference type="InterPro" id="IPR009030">
    <property type="entry name" value="Growth_fac_rcpt_cys_sf"/>
</dbReference>
<dbReference type="InterPro" id="IPR012213">
    <property type="entry name" value="IGFBP-5"/>
</dbReference>
<dbReference type="InterPro" id="IPR000867">
    <property type="entry name" value="IGFBP-like"/>
</dbReference>
<dbReference type="InterPro" id="IPR022321">
    <property type="entry name" value="IGFBP_1-6_chordata"/>
</dbReference>
<dbReference type="InterPro" id="IPR017891">
    <property type="entry name" value="Insulin_GF-bd_Cys-rich_CS"/>
</dbReference>
<dbReference type="InterPro" id="IPR000716">
    <property type="entry name" value="Thyroglobulin_1"/>
</dbReference>
<dbReference type="InterPro" id="IPR036857">
    <property type="entry name" value="Thyroglobulin_1_sf"/>
</dbReference>
<dbReference type="PANTHER" id="PTHR11551">
    <property type="entry name" value="INSULIN-LIKE GROWTH FACTOR BINDING PROTEIN"/>
    <property type="match status" value="1"/>
</dbReference>
<dbReference type="PANTHER" id="PTHR11551:SF4">
    <property type="entry name" value="INSULIN-LIKE GROWTH FACTOR-BINDING PROTEIN 5"/>
    <property type="match status" value="1"/>
</dbReference>
<dbReference type="Pfam" id="PF00219">
    <property type="entry name" value="IGFBP"/>
    <property type="match status" value="1"/>
</dbReference>
<dbReference type="Pfam" id="PF00086">
    <property type="entry name" value="Thyroglobulin_1"/>
    <property type="match status" value="1"/>
</dbReference>
<dbReference type="PRINTS" id="PR01976">
    <property type="entry name" value="IGFBPFAMILY"/>
</dbReference>
<dbReference type="PRINTS" id="PR01981">
    <property type="entry name" value="IGFBPFAMILY5"/>
</dbReference>
<dbReference type="SMART" id="SM00121">
    <property type="entry name" value="IB"/>
    <property type="match status" value="1"/>
</dbReference>
<dbReference type="SMART" id="SM00211">
    <property type="entry name" value="TY"/>
    <property type="match status" value="1"/>
</dbReference>
<dbReference type="SUPFAM" id="SSF57184">
    <property type="entry name" value="Growth factor receptor domain"/>
    <property type="match status" value="1"/>
</dbReference>
<dbReference type="SUPFAM" id="SSF57610">
    <property type="entry name" value="Thyroglobulin type-1 domain"/>
    <property type="match status" value="1"/>
</dbReference>
<dbReference type="PROSITE" id="PS00222">
    <property type="entry name" value="IGFBP_N_1"/>
    <property type="match status" value="1"/>
</dbReference>
<dbReference type="PROSITE" id="PS51323">
    <property type="entry name" value="IGFBP_N_2"/>
    <property type="match status" value="1"/>
</dbReference>
<dbReference type="PROSITE" id="PS00484">
    <property type="entry name" value="THYROGLOBULIN_1_1"/>
    <property type="match status" value="1"/>
</dbReference>
<dbReference type="PROSITE" id="PS51162">
    <property type="entry name" value="THYROGLOBULIN_1_2"/>
    <property type="match status" value="1"/>
</dbReference>